<organism>
    <name type="scientific">Coccidioides posadasii (strain C735)</name>
    <name type="common">Valley fever fungus</name>
    <dbReference type="NCBI Taxonomy" id="222929"/>
    <lineage>
        <taxon>Eukaryota</taxon>
        <taxon>Fungi</taxon>
        <taxon>Dikarya</taxon>
        <taxon>Ascomycota</taxon>
        <taxon>Pezizomycotina</taxon>
        <taxon>Eurotiomycetes</taxon>
        <taxon>Eurotiomycetidae</taxon>
        <taxon>Onygenales</taxon>
        <taxon>Onygenaceae</taxon>
        <taxon>Coccidioides</taxon>
    </lineage>
</organism>
<name>RCF1_COCP7</name>
<evidence type="ECO:0000250" key="1"/>
<evidence type="ECO:0000255" key="2"/>
<evidence type="ECO:0000255" key="3">
    <source>
        <dbReference type="PROSITE-ProRule" id="PRU00836"/>
    </source>
</evidence>
<evidence type="ECO:0000256" key="4">
    <source>
        <dbReference type="SAM" id="MobiDB-lite"/>
    </source>
</evidence>
<evidence type="ECO:0000305" key="5"/>
<reference key="1">
    <citation type="journal article" date="2009" name="Genome Res.">
        <title>Comparative genomic analyses of the human fungal pathogens Coccidioides and their relatives.</title>
        <authorList>
            <person name="Sharpton T.J."/>
            <person name="Stajich J.E."/>
            <person name="Rounsley S.D."/>
            <person name="Gardner M.J."/>
            <person name="Wortman J.R."/>
            <person name="Jordar V.S."/>
            <person name="Maiti R."/>
            <person name="Kodira C.D."/>
            <person name="Neafsey D.E."/>
            <person name="Zeng Q."/>
            <person name="Hung C.-Y."/>
            <person name="McMahan C."/>
            <person name="Muszewska A."/>
            <person name="Grynberg M."/>
            <person name="Mandel M.A."/>
            <person name="Kellner E.M."/>
            <person name="Barker B.M."/>
            <person name="Galgiani J.N."/>
            <person name="Orbach M.J."/>
            <person name="Kirkland T.N."/>
            <person name="Cole G.T."/>
            <person name="Henn M.R."/>
            <person name="Birren B.W."/>
            <person name="Taylor J.W."/>
        </authorList>
    </citation>
    <scope>NUCLEOTIDE SEQUENCE [LARGE SCALE GENOMIC DNA]</scope>
    <source>
        <strain>C735</strain>
    </source>
</reference>
<comment type="function">
    <text evidence="1">Cytochrome c oxidase subunit which plays a role in assembly of respiratory supercomplexes.</text>
</comment>
<comment type="subunit">
    <text evidence="1">Associates with the respiratory chain complex III/complex IV supercomplex.</text>
</comment>
<comment type="subcellular location">
    <subcellularLocation>
        <location evidence="3">Mitochondrion membrane</location>
        <topology evidence="3">Multi-pass membrane protein</topology>
    </subcellularLocation>
</comment>
<comment type="similarity">
    <text evidence="5">Belongs to the RCF1 family.</text>
</comment>
<accession>C5P447</accession>
<protein>
    <recommendedName>
        <fullName>Respiratory supercomplex factor 1, mitochondrial</fullName>
    </recommendedName>
</protein>
<keyword id="KW-0175">Coiled coil</keyword>
<keyword id="KW-0472">Membrane</keyword>
<keyword id="KW-0496">Mitochondrion</keyword>
<keyword id="KW-0812">Transmembrane</keyword>
<keyword id="KW-1133">Transmembrane helix</keyword>
<sequence>MSDKPLPSSFDSDPEFFEENPWVKLRRRLREEPLIPLGCAATSYALWRAYKSMKAGDSDQLNRMFRYRIYAQAFTLVAVVVGGIYYKSERAQRKELERAMEEKKSQAKRDAWLRELEIRDQEDRDWRERHAAVERAAKEAGMKPKDVSKGLAGESAGNQEGEAKSNVGVLDAVKNLVKEK</sequence>
<feature type="chain" id="PRO_0000399630" description="Respiratory supercomplex factor 1, mitochondrial">
    <location>
        <begin position="1"/>
        <end position="180"/>
    </location>
</feature>
<feature type="transmembrane region" description="Helical" evidence="3">
    <location>
        <begin position="34"/>
        <end position="50"/>
    </location>
</feature>
<feature type="transmembrane region" description="Helical" evidence="3">
    <location>
        <begin position="69"/>
        <end position="86"/>
    </location>
</feature>
<feature type="domain" description="HIG1" evidence="3">
    <location>
        <begin position="6"/>
        <end position="97"/>
    </location>
</feature>
<feature type="region of interest" description="Disordered" evidence="4">
    <location>
        <begin position="135"/>
        <end position="165"/>
    </location>
</feature>
<feature type="coiled-coil region" evidence="2">
    <location>
        <begin position="84"/>
        <end position="111"/>
    </location>
</feature>
<feature type="compositionally biased region" description="Basic and acidic residues" evidence="4">
    <location>
        <begin position="135"/>
        <end position="148"/>
    </location>
</feature>
<proteinExistence type="inferred from homology"/>
<dbReference type="EMBL" id="ACFW01000015">
    <property type="protein sequence ID" value="EER28465.1"/>
    <property type="molecule type" value="Genomic_DNA"/>
</dbReference>
<dbReference type="RefSeq" id="XP_003070610.1">
    <property type="nucleotide sequence ID" value="XM_003070564.1"/>
</dbReference>
<dbReference type="GeneID" id="9696105"/>
<dbReference type="KEGG" id="cpw:9696105"/>
<dbReference type="VEuPathDB" id="FungiDB:CPC735_063380"/>
<dbReference type="HOGENOM" id="CLU_087356_0_2_1"/>
<dbReference type="OrthoDB" id="6604018at2759"/>
<dbReference type="Proteomes" id="UP000009084">
    <property type="component" value="Unassembled WGS sequence"/>
</dbReference>
<dbReference type="GO" id="GO:0031966">
    <property type="term" value="C:mitochondrial membrane"/>
    <property type="evidence" value="ECO:0007669"/>
    <property type="project" value="UniProtKB-SubCell"/>
</dbReference>
<dbReference type="GO" id="GO:0097250">
    <property type="term" value="P:mitochondrial respirasome assembly"/>
    <property type="evidence" value="ECO:0007669"/>
    <property type="project" value="TreeGrafter"/>
</dbReference>
<dbReference type="Gene3D" id="6.10.140.1320">
    <property type="match status" value="1"/>
</dbReference>
<dbReference type="InterPro" id="IPR007667">
    <property type="entry name" value="Hypoxia_induced_domain"/>
</dbReference>
<dbReference type="InterPro" id="IPR050355">
    <property type="entry name" value="RCF1"/>
</dbReference>
<dbReference type="PANTHER" id="PTHR12297:SF3">
    <property type="entry name" value="HIG1 DOMAIN FAMILY MEMBER 1A"/>
    <property type="match status" value="1"/>
</dbReference>
<dbReference type="PANTHER" id="PTHR12297">
    <property type="entry name" value="HYPOXIA-INDUCBILE GENE 1 HIG1 -RELATED"/>
    <property type="match status" value="1"/>
</dbReference>
<dbReference type="Pfam" id="PF04588">
    <property type="entry name" value="HIG_1_N"/>
    <property type="match status" value="1"/>
</dbReference>
<dbReference type="PROSITE" id="PS51503">
    <property type="entry name" value="HIG1"/>
    <property type="match status" value="1"/>
</dbReference>
<gene>
    <name type="primary">RCF1</name>
    <name type="synonym">AIM31</name>
    <name type="ORF">CPC735_063380</name>
</gene>